<comment type="function">
    <text evidence="2">Component of the eukaryotic translation initiation factor 3 (eIF-3) complex, which is required for several steps in the initiation of protein synthesis. The eIF-3 complex associates with the 40S ribosome and facilitates the recruitment of eIF-1, eIF-1A, eIF-2:GTP:methionyl-tRNAi and eIF-5 to form the 43S pre-initiation complex (43S PIC). The eIF-3 complex stimulates mRNA recruitment to the 43S PIC and scanning of the mRNA for AUG recognition. The eIF-3 complex is also required for disassembly and recycling of post-termination ribosomal complexes and subsequently prevents premature joining of the 40S and 60S ribosomal subunits prior to initiation. The eIF-3 complex specifically targets and initiates translation of a subset of mRNAs involved in cell proliferation, including cell cycling, differentiation and apoptosis, and uses different modes of RNA stem-loop binding to exert either translational activation or repression.</text>
</comment>
<comment type="subunit">
    <text evidence="2">Component of the eukaryotic translation initiation factor 3 (eIF-3) complex, which is composed of 13 subunits: EIF3A, EIF3B, EIF3C, EIF3D, EIF3E, EIF3F, EIF3G, EIF3H, EIF3I, EIF3J, EIF3K, EIF3L and EIF3M. The eIF-3 complex appears to include 3 stable modules: module A is composed of EIF3A, EIF3B, EIF3G and EIF3I; module B is composed of EIF3F, EIF3H, and EIF3M; and module C is composed of EIF3C, EIF3D, EIF3E, EIF3K and EIF3L. EIF3C of module C binds EIF3B of module A and EIF3H of module B, thereby linking the three modules. EIF3J is a labile subunit that binds to the eIF-3 complex via EIF3B. The eIF-3 complex interacts with RPS6KB1 under conditions of nutrient depletion. Mitogenic stimulation leads to binding and activation of a complex composed of MTOR and RPTOR, leading to phosphorylation and release of RPS6KB1 and binding of EIF4B to eIF-3.</text>
</comment>
<comment type="subcellular location">
    <subcellularLocation>
        <location evidence="2">Cytoplasm</location>
    </subcellularLocation>
</comment>
<comment type="PTM">
    <text evidence="2">Phosphorylated by TGF-beta type II receptor.</text>
</comment>
<comment type="similarity">
    <text evidence="2">Belongs to the eIF-3 subunit I family.</text>
</comment>
<accession>B0BNA7</accession>
<organism>
    <name type="scientific">Rattus norvegicus</name>
    <name type="common">Rat</name>
    <dbReference type="NCBI Taxonomy" id="10116"/>
    <lineage>
        <taxon>Eukaryota</taxon>
        <taxon>Metazoa</taxon>
        <taxon>Chordata</taxon>
        <taxon>Craniata</taxon>
        <taxon>Vertebrata</taxon>
        <taxon>Euteleostomi</taxon>
        <taxon>Mammalia</taxon>
        <taxon>Eutheria</taxon>
        <taxon>Euarchontoglires</taxon>
        <taxon>Glires</taxon>
        <taxon>Rodentia</taxon>
        <taxon>Myomorpha</taxon>
        <taxon>Muroidea</taxon>
        <taxon>Muridae</taxon>
        <taxon>Murinae</taxon>
        <taxon>Rattus</taxon>
    </lineage>
</organism>
<protein>
    <recommendedName>
        <fullName evidence="2">Eukaryotic translation initiation factor 3 subunit I</fullName>
        <shortName evidence="2">eIF3i</shortName>
    </recommendedName>
    <alternativeName>
        <fullName evidence="2">Eukaryotic translation initiation factor 3 subunit 2</fullName>
    </alternativeName>
    <alternativeName>
        <fullName evidence="2">eIF-3-beta</fullName>
    </alternativeName>
    <alternativeName>
        <fullName evidence="2">eIF3 p36</fullName>
    </alternativeName>
</protein>
<dbReference type="EMBL" id="BC158748">
    <property type="protein sequence ID" value="AAI58749.1"/>
    <property type="molecule type" value="mRNA"/>
</dbReference>
<dbReference type="EMBL" id="BC158821">
    <property type="protein sequence ID" value="AAI58822.1"/>
    <property type="molecule type" value="mRNA"/>
</dbReference>
<dbReference type="RefSeq" id="NP_001108507.1">
    <property type="nucleotide sequence ID" value="NM_001115035.1"/>
</dbReference>
<dbReference type="SMR" id="B0BNA7"/>
<dbReference type="BioGRID" id="597308">
    <property type="interactions" value="2"/>
</dbReference>
<dbReference type="FunCoup" id="B0BNA7">
    <property type="interactions" value="2974"/>
</dbReference>
<dbReference type="IntAct" id="B0BNA7">
    <property type="interactions" value="2"/>
</dbReference>
<dbReference type="STRING" id="10116.ENSRNOP00000067288"/>
<dbReference type="iPTMnet" id="B0BNA7"/>
<dbReference type="PhosphoSitePlus" id="B0BNA7"/>
<dbReference type="jPOST" id="B0BNA7"/>
<dbReference type="PeptideAtlas" id="B0BNA7"/>
<dbReference type="GeneID" id="682390"/>
<dbReference type="KEGG" id="rno:682390"/>
<dbReference type="AGR" id="RGD:1584560"/>
<dbReference type="CTD" id="8668"/>
<dbReference type="RGD" id="1584560">
    <property type="gene designation" value="Eif3i"/>
</dbReference>
<dbReference type="InParanoid" id="B0BNA7"/>
<dbReference type="OrthoDB" id="1258at9989"/>
<dbReference type="PhylomeDB" id="B0BNA7"/>
<dbReference type="Reactome" id="R-RNO-156827">
    <property type="pathway name" value="L13a-mediated translational silencing of Ceruloplasmin expression"/>
</dbReference>
<dbReference type="Reactome" id="R-RNO-72649">
    <property type="pathway name" value="Translation initiation complex formation"/>
</dbReference>
<dbReference type="Reactome" id="R-RNO-72689">
    <property type="pathway name" value="Formation of a pool of free 40S subunits"/>
</dbReference>
<dbReference type="Reactome" id="R-RNO-72695">
    <property type="pathway name" value="Formation of the ternary complex, and subsequently, the 43S complex"/>
</dbReference>
<dbReference type="Reactome" id="R-RNO-72702">
    <property type="pathway name" value="Ribosomal scanning and start codon recognition"/>
</dbReference>
<dbReference type="PRO" id="PR:B0BNA7"/>
<dbReference type="Proteomes" id="UP000002494">
    <property type="component" value="Unplaced"/>
</dbReference>
<dbReference type="GO" id="GO:0016282">
    <property type="term" value="C:eukaryotic 43S preinitiation complex"/>
    <property type="evidence" value="ECO:0007669"/>
    <property type="project" value="UniProtKB-UniRule"/>
</dbReference>
<dbReference type="GO" id="GO:0033290">
    <property type="term" value="C:eukaryotic 48S preinitiation complex"/>
    <property type="evidence" value="ECO:0007669"/>
    <property type="project" value="UniProtKB-UniRule"/>
</dbReference>
<dbReference type="GO" id="GO:0005852">
    <property type="term" value="C:eukaryotic translation initiation factor 3 complex"/>
    <property type="evidence" value="ECO:0000250"/>
    <property type="project" value="UniProtKB"/>
</dbReference>
<dbReference type="GO" id="GO:0071541">
    <property type="term" value="C:eukaryotic translation initiation factor 3 complex, eIF3m"/>
    <property type="evidence" value="ECO:0000266"/>
    <property type="project" value="RGD"/>
</dbReference>
<dbReference type="GO" id="GO:0045202">
    <property type="term" value="C:synapse"/>
    <property type="evidence" value="ECO:0000266"/>
    <property type="project" value="RGD"/>
</dbReference>
<dbReference type="GO" id="GO:0003723">
    <property type="term" value="F:RNA binding"/>
    <property type="evidence" value="ECO:0000318"/>
    <property type="project" value="GO_Central"/>
</dbReference>
<dbReference type="GO" id="GO:0003743">
    <property type="term" value="F:translation initiation factor activity"/>
    <property type="evidence" value="ECO:0000250"/>
    <property type="project" value="UniProtKB"/>
</dbReference>
<dbReference type="GO" id="GO:0002183">
    <property type="term" value="P:cytoplasmic translational initiation"/>
    <property type="evidence" value="ECO:0000318"/>
    <property type="project" value="GO_Central"/>
</dbReference>
<dbReference type="GO" id="GO:0001732">
    <property type="term" value="P:formation of cytoplasmic translation initiation complex"/>
    <property type="evidence" value="ECO:0007669"/>
    <property type="project" value="UniProtKB-UniRule"/>
</dbReference>
<dbReference type="GO" id="GO:0006413">
    <property type="term" value="P:translational initiation"/>
    <property type="evidence" value="ECO:0000250"/>
    <property type="project" value="UniProtKB"/>
</dbReference>
<dbReference type="FunFam" id="2.130.10.10:FF:000127">
    <property type="entry name" value="Eukaryotic translation initiation factor 3 subunit I"/>
    <property type="match status" value="1"/>
</dbReference>
<dbReference type="Gene3D" id="2.130.10.10">
    <property type="entry name" value="YVTN repeat-like/Quinoprotein amine dehydrogenase"/>
    <property type="match status" value="1"/>
</dbReference>
<dbReference type="HAMAP" id="MF_03008">
    <property type="entry name" value="eIF3i"/>
    <property type="match status" value="1"/>
</dbReference>
<dbReference type="InterPro" id="IPR027525">
    <property type="entry name" value="eIF3i"/>
</dbReference>
<dbReference type="InterPro" id="IPR015943">
    <property type="entry name" value="WD40/YVTN_repeat-like_dom_sf"/>
</dbReference>
<dbReference type="InterPro" id="IPR019775">
    <property type="entry name" value="WD40_repeat_CS"/>
</dbReference>
<dbReference type="InterPro" id="IPR036322">
    <property type="entry name" value="WD40_repeat_dom_sf"/>
</dbReference>
<dbReference type="InterPro" id="IPR001680">
    <property type="entry name" value="WD40_rpt"/>
</dbReference>
<dbReference type="PANTHER" id="PTHR19877">
    <property type="entry name" value="EUKARYOTIC TRANSLATION INITIATION FACTOR 3 SUBUNIT I"/>
    <property type="match status" value="1"/>
</dbReference>
<dbReference type="PANTHER" id="PTHR19877:SF1">
    <property type="entry name" value="EUKARYOTIC TRANSLATION INITIATION FACTOR 3 SUBUNIT I"/>
    <property type="match status" value="1"/>
</dbReference>
<dbReference type="Pfam" id="PF24805">
    <property type="entry name" value="EIF3I"/>
    <property type="match status" value="1"/>
</dbReference>
<dbReference type="SMART" id="SM00320">
    <property type="entry name" value="WD40"/>
    <property type="match status" value="5"/>
</dbReference>
<dbReference type="SUPFAM" id="SSF50978">
    <property type="entry name" value="WD40 repeat-like"/>
    <property type="match status" value="1"/>
</dbReference>
<dbReference type="PROSITE" id="PS00678">
    <property type="entry name" value="WD_REPEATS_1"/>
    <property type="match status" value="1"/>
</dbReference>
<dbReference type="PROSITE" id="PS50082">
    <property type="entry name" value="WD_REPEATS_2"/>
    <property type="match status" value="4"/>
</dbReference>
<dbReference type="PROSITE" id="PS50294">
    <property type="entry name" value="WD_REPEATS_REGION"/>
    <property type="match status" value="2"/>
</dbReference>
<keyword id="KW-0007">Acetylation</keyword>
<keyword id="KW-0963">Cytoplasm</keyword>
<keyword id="KW-0396">Initiation factor</keyword>
<keyword id="KW-1017">Isopeptide bond</keyword>
<keyword id="KW-0597">Phosphoprotein</keyword>
<keyword id="KW-0648">Protein biosynthesis</keyword>
<keyword id="KW-1185">Reference proteome</keyword>
<keyword id="KW-0677">Repeat</keyword>
<keyword id="KW-0832">Ubl conjugation</keyword>
<keyword id="KW-0853">WD repeat</keyword>
<reference key="1">
    <citation type="journal article" date="2004" name="Genome Res.">
        <title>The status, quality, and expansion of the NIH full-length cDNA project: the Mammalian Gene Collection (MGC).</title>
        <authorList>
            <consortium name="The MGC Project Team"/>
        </authorList>
    </citation>
    <scope>NUCLEOTIDE SEQUENCE [LARGE SCALE MRNA]</scope>
    <source>
        <tissue>Spleen</tissue>
    </source>
</reference>
<gene>
    <name type="primary">Eif3i</name>
    <name type="synonym">Eif3s2</name>
</gene>
<name>EIF3I_RAT</name>
<feature type="chain" id="PRO_0000329458" description="Eukaryotic translation initiation factor 3 subunit I">
    <location>
        <begin position="1"/>
        <end position="325"/>
    </location>
</feature>
<feature type="repeat" description="WD 1">
    <location>
        <begin position="8"/>
        <end position="47"/>
    </location>
</feature>
<feature type="repeat" description="WD 2">
    <location>
        <begin position="50"/>
        <end position="91"/>
    </location>
</feature>
<feature type="repeat" description="WD 3">
    <location>
        <begin position="144"/>
        <end position="183"/>
    </location>
</feature>
<feature type="repeat" description="WD 4">
    <location>
        <begin position="186"/>
        <end position="225"/>
    </location>
</feature>
<feature type="repeat" description="WD 5">
    <location>
        <begin position="283"/>
        <end position="324"/>
    </location>
</feature>
<feature type="modified residue" description="N6-acetyllysine" evidence="1">
    <location>
        <position position="264"/>
    </location>
</feature>
<feature type="modified residue" description="Phosphotyrosine" evidence="1">
    <location>
        <position position="308"/>
    </location>
</feature>
<feature type="cross-link" description="Glycyl lysine isopeptide (Lys-Gly) (interchain with G-Cter in ubiquitin)" evidence="1">
    <location>
        <position position="282"/>
    </location>
</feature>
<evidence type="ECO:0000250" key="1">
    <source>
        <dbReference type="UniProtKB" id="Q13347"/>
    </source>
</evidence>
<evidence type="ECO:0000255" key="2">
    <source>
        <dbReference type="HAMAP-Rule" id="MF_03008"/>
    </source>
</evidence>
<sequence length="325" mass="36461">MKPILLQGHERSITQIKYNREGDLLFTVAKDPIVNVWYSVNGERLGTYMGHTGAVWCVDADWDTKHVLTGSADNSCRLWDCETGKQLALLKTNSAVRTCGFDFGGNIIMFSTDKQMGYQCFVSFFDLRDPSQIDSNEPYMKIPCNDSKITSAVWGPLGECIIAGHESGELNQYSAKSGEVLVNVKEHSRQINDIQLSRDMTMFVTASKDNTAKLFDSTSLEHQKTFRTERPVNSAALSPNYDHVVLGGGQEAMDVTTTSTRIGKFEARFFHLAFEEEFGRVKGHFGPINSVAFHPDGKSYSSGGEDGYVRIHYFDPQYFEFEFEA</sequence>
<proteinExistence type="evidence at transcript level"/>